<feature type="chain" id="PRO_1000045435" description="High frequency lysogenization protein HflD homolog">
    <location>
        <begin position="1"/>
        <end position="209"/>
    </location>
</feature>
<name>HFLD_SACD2</name>
<sequence length="209" mass="24106">MSKSWRELTIAFAGIVLATKQVAQLAKTGYLKTDEFETSVRSLFERNPASTEATYGSGHNLAEAFEELEKLLNNHRDPRNADLLRYVLGVLHLQKKLIKRKEMLYVIGNRLEKAETQAQHFGITHDNVISNIAEIYTDTLSKFPYRIQVTGEATYLQQTRVASQIRVLLLAAIRSATLWRQLGGSRWQLLLYRNQMAKHTHELYLEFKR</sequence>
<accession>Q21K43</accession>
<dbReference type="EMBL" id="CP000282">
    <property type="protein sequence ID" value="ABD80936.1"/>
    <property type="molecule type" value="Genomic_DNA"/>
</dbReference>
<dbReference type="RefSeq" id="WP_011468156.1">
    <property type="nucleotide sequence ID" value="NC_007912.1"/>
</dbReference>
<dbReference type="SMR" id="Q21K43"/>
<dbReference type="STRING" id="203122.Sde_1676"/>
<dbReference type="GeneID" id="98613351"/>
<dbReference type="KEGG" id="sde:Sde_1676"/>
<dbReference type="eggNOG" id="COG2915">
    <property type="taxonomic scope" value="Bacteria"/>
</dbReference>
<dbReference type="HOGENOM" id="CLU_098920_0_0_6"/>
<dbReference type="OrthoDB" id="9788031at2"/>
<dbReference type="Proteomes" id="UP000001947">
    <property type="component" value="Chromosome"/>
</dbReference>
<dbReference type="GO" id="GO:0005737">
    <property type="term" value="C:cytoplasm"/>
    <property type="evidence" value="ECO:0007669"/>
    <property type="project" value="UniProtKB-SubCell"/>
</dbReference>
<dbReference type="GO" id="GO:0005886">
    <property type="term" value="C:plasma membrane"/>
    <property type="evidence" value="ECO:0007669"/>
    <property type="project" value="UniProtKB-SubCell"/>
</dbReference>
<dbReference type="Gene3D" id="1.10.3890.10">
    <property type="entry name" value="HflD-like"/>
    <property type="match status" value="1"/>
</dbReference>
<dbReference type="HAMAP" id="MF_00695">
    <property type="entry name" value="HflD_protein"/>
    <property type="match status" value="1"/>
</dbReference>
<dbReference type="InterPro" id="IPR007451">
    <property type="entry name" value="HflD"/>
</dbReference>
<dbReference type="InterPro" id="IPR035932">
    <property type="entry name" value="HflD-like_sf"/>
</dbReference>
<dbReference type="NCBIfam" id="NF001246">
    <property type="entry name" value="PRK00218.1-2"/>
    <property type="match status" value="1"/>
</dbReference>
<dbReference type="PANTHER" id="PTHR38100">
    <property type="entry name" value="HIGH FREQUENCY LYSOGENIZATION PROTEIN HFLD"/>
    <property type="match status" value="1"/>
</dbReference>
<dbReference type="PANTHER" id="PTHR38100:SF1">
    <property type="entry name" value="HIGH FREQUENCY LYSOGENIZATION PROTEIN HFLD"/>
    <property type="match status" value="1"/>
</dbReference>
<dbReference type="Pfam" id="PF04356">
    <property type="entry name" value="DUF489"/>
    <property type="match status" value="1"/>
</dbReference>
<dbReference type="SUPFAM" id="SSF101322">
    <property type="entry name" value="YcfC-like"/>
    <property type="match status" value="1"/>
</dbReference>
<evidence type="ECO:0000255" key="1">
    <source>
        <dbReference type="HAMAP-Rule" id="MF_00695"/>
    </source>
</evidence>
<comment type="subcellular location">
    <subcellularLocation>
        <location>Cytoplasm</location>
    </subcellularLocation>
    <subcellularLocation>
        <location evidence="1">Cell inner membrane</location>
        <topology evidence="1">Peripheral membrane protein</topology>
        <orientation evidence="1">Cytoplasmic side</orientation>
    </subcellularLocation>
</comment>
<comment type="similarity">
    <text evidence="1">Belongs to the HflD family.</text>
</comment>
<protein>
    <recommendedName>
        <fullName evidence="1">High frequency lysogenization protein HflD homolog</fullName>
    </recommendedName>
</protein>
<organism>
    <name type="scientific">Saccharophagus degradans (strain 2-40 / ATCC 43961 / DSM 17024)</name>
    <dbReference type="NCBI Taxonomy" id="203122"/>
    <lineage>
        <taxon>Bacteria</taxon>
        <taxon>Pseudomonadati</taxon>
        <taxon>Pseudomonadota</taxon>
        <taxon>Gammaproteobacteria</taxon>
        <taxon>Cellvibrionales</taxon>
        <taxon>Cellvibrionaceae</taxon>
        <taxon>Saccharophagus</taxon>
    </lineage>
</organism>
<reference key="1">
    <citation type="journal article" date="2008" name="PLoS Genet.">
        <title>Complete genome sequence of the complex carbohydrate-degrading marine bacterium, Saccharophagus degradans strain 2-40 T.</title>
        <authorList>
            <person name="Weiner R.M."/>
            <person name="Taylor L.E. II"/>
            <person name="Henrissat B."/>
            <person name="Hauser L."/>
            <person name="Land M."/>
            <person name="Coutinho P.M."/>
            <person name="Rancurel C."/>
            <person name="Saunders E.H."/>
            <person name="Longmire A.G."/>
            <person name="Zhang H."/>
            <person name="Bayer E.A."/>
            <person name="Gilbert H.J."/>
            <person name="Larimer F."/>
            <person name="Zhulin I.B."/>
            <person name="Ekborg N.A."/>
            <person name="Lamed R."/>
            <person name="Richardson P.M."/>
            <person name="Borovok I."/>
            <person name="Hutcheson S."/>
        </authorList>
    </citation>
    <scope>NUCLEOTIDE SEQUENCE [LARGE SCALE GENOMIC DNA]</scope>
    <source>
        <strain>2-40 / ATCC 43961 / DSM 17024</strain>
    </source>
</reference>
<proteinExistence type="inferred from homology"/>
<gene>
    <name evidence="1" type="primary">hflD</name>
    <name type="ordered locus">Sde_1676</name>
</gene>
<keyword id="KW-0997">Cell inner membrane</keyword>
<keyword id="KW-1003">Cell membrane</keyword>
<keyword id="KW-0963">Cytoplasm</keyword>
<keyword id="KW-0472">Membrane</keyword>
<keyword id="KW-1185">Reference proteome</keyword>